<evidence type="ECO:0000250" key="1"/>
<evidence type="ECO:0000250" key="2">
    <source>
        <dbReference type="UniProtKB" id="Q61694"/>
    </source>
</evidence>
<evidence type="ECO:0000255" key="3"/>
<evidence type="ECO:0000305" key="4"/>
<feature type="chain" id="PRO_0000087790" description="3 beta-hydroxysteroid dehydrogenase/Delta 5--&gt;4-isomerase type 4">
    <location>
        <begin position="1"/>
        <end position="373"/>
    </location>
</feature>
<feature type="transmembrane region" description="Helical" evidence="3">
    <location>
        <begin position="288"/>
        <end position="308"/>
    </location>
</feature>
<feature type="active site" description="Proton acceptor" evidence="1">
    <location>
        <position position="155"/>
    </location>
</feature>
<feature type="binding site" evidence="1">
    <location>
        <position position="159"/>
    </location>
    <ligand>
        <name>NAD(+)</name>
        <dbReference type="ChEBI" id="CHEBI:57540"/>
    </ligand>
</feature>
<feature type="modified residue" description="N6-acetyllysine" evidence="2">
    <location>
        <position position="350"/>
    </location>
</feature>
<feature type="sequence conflict" description="In Ref. 1; AAA40606." evidence="4" ref="1">
    <original>S</original>
    <variation>N</variation>
    <location>
        <position position="208"/>
    </location>
</feature>
<feature type="sequence conflict" description="In Ref. 1; AAA40606." evidence="4" ref="1">
    <original>K</original>
    <variation>E</variation>
    <location>
        <position position="341"/>
    </location>
</feature>
<organism>
    <name type="scientific">Rattus norvegicus</name>
    <name type="common">Rat</name>
    <dbReference type="NCBI Taxonomy" id="10116"/>
    <lineage>
        <taxon>Eukaryota</taxon>
        <taxon>Metazoa</taxon>
        <taxon>Chordata</taxon>
        <taxon>Craniata</taxon>
        <taxon>Vertebrata</taxon>
        <taxon>Euteleostomi</taxon>
        <taxon>Mammalia</taxon>
        <taxon>Eutheria</taxon>
        <taxon>Euarchontoglires</taxon>
        <taxon>Glires</taxon>
        <taxon>Rodentia</taxon>
        <taxon>Myomorpha</taxon>
        <taxon>Muroidea</taxon>
        <taxon>Muridae</taxon>
        <taxon>Murinae</taxon>
        <taxon>Rattus</taxon>
    </lineage>
</organism>
<keyword id="KW-0007">Acetylation</keyword>
<keyword id="KW-0256">Endoplasmic reticulum</keyword>
<keyword id="KW-0413">Isomerase</keyword>
<keyword id="KW-0472">Membrane</keyword>
<keyword id="KW-0496">Mitochondrion</keyword>
<keyword id="KW-0511">Multifunctional enzyme</keyword>
<keyword id="KW-0520">NAD</keyword>
<keyword id="KW-0560">Oxidoreductase</keyword>
<keyword id="KW-1185">Reference proteome</keyword>
<keyword id="KW-0755">Steroidogenesis</keyword>
<keyword id="KW-0812">Transmembrane</keyword>
<keyword id="KW-1133">Transmembrane helix</keyword>
<comment type="function">
    <text>3-beta-HSD is a bifunctional enzyme, that catalyzes the oxidative conversion of Delta(5)-ene-3-beta-hydroxy steroid, and the oxidative conversion of ketosteroids. The 3-beta-HSD enzymatic system plays a crucial role in the biosynthesis of all classes of hormonal steroids.</text>
</comment>
<comment type="catalytic activity">
    <reaction>
        <text>a 3beta-hydroxy-Delta(5)-steroid + NAD(+) = a 3-oxo-Delta(5)-steroid + NADH + H(+)</text>
        <dbReference type="Rhea" id="RHEA:24076"/>
        <dbReference type="ChEBI" id="CHEBI:1722"/>
        <dbReference type="ChEBI" id="CHEBI:15378"/>
        <dbReference type="ChEBI" id="CHEBI:47907"/>
        <dbReference type="ChEBI" id="CHEBI:57540"/>
        <dbReference type="ChEBI" id="CHEBI:57945"/>
        <dbReference type="EC" id="1.1.1.145"/>
    </reaction>
</comment>
<comment type="catalytic activity">
    <reaction>
        <text>a 3-oxo-Delta(5)-steroid = a 3-oxo-Delta(4)-steroid</text>
        <dbReference type="Rhea" id="RHEA:14709"/>
        <dbReference type="ChEBI" id="CHEBI:47907"/>
        <dbReference type="ChEBI" id="CHEBI:47909"/>
        <dbReference type="EC" id="5.3.3.1"/>
    </reaction>
</comment>
<comment type="pathway">
    <text>Lipid metabolism; steroid biosynthesis.</text>
</comment>
<comment type="subcellular location">
    <subcellularLocation>
        <location>Endoplasmic reticulum membrane</location>
        <topology>Single-pass membrane protein</topology>
    </subcellularLocation>
    <subcellularLocation>
        <location>Mitochondrion membrane</location>
        <topology>Single-pass membrane protein</topology>
    </subcellularLocation>
</comment>
<comment type="tissue specificity">
    <text>Skin, placenta, also detectable in ovary and adrenal gland.</text>
</comment>
<comment type="similarity">
    <text evidence="4">Belongs to the 3-beta-HSD family.</text>
</comment>
<reference key="1">
    <citation type="journal article" date="1993" name="J. Biol. Chem.">
        <title>Structure and tissue-specific expression of a novel member of the rat 3 beta-hydroxysteroid dehydrogenase/delta 5-delta 4 isomerase (3 beta-HSD) family. The exclusive 3 beta-HSD gene expression in the skin.</title>
        <authorList>
            <person name="Simard J."/>
            <person name="Couet J."/>
            <person name="Durocher F."/>
            <person name="Labrie Y."/>
            <person name="Sanchez R."/>
            <person name="Breton N."/>
            <person name="Turgeon C."/>
            <person name="Labrie F."/>
        </authorList>
    </citation>
    <scope>NUCLEOTIDE SEQUENCE [MRNA]</scope>
    <source>
        <strain>Sprague-Dawley</strain>
        <tissue>Ovary</tissue>
    </source>
</reference>
<reference key="2">
    <citation type="journal article" date="2004" name="Genome Res.">
        <title>The status, quality, and expansion of the NIH full-length cDNA project: the Mammalian Gene Collection (MGC).</title>
        <authorList>
            <consortium name="The MGC Project Team"/>
        </authorList>
    </citation>
    <scope>NUCLEOTIDE SEQUENCE [LARGE SCALE MRNA]</scope>
    <source>
        <tissue>Ovary</tissue>
    </source>
</reference>
<proteinExistence type="evidence at transcript level"/>
<gene>
    <name type="primary">Hsd3b6</name>
</gene>
<protein>
    <recommendedName>
        <fullName>3 beta-hydroxysteroid dehydrogenase/Delta 5--&gt;4-isomerase type 4</fullName>
    </recommendedName>
    <alternativeName>
        <fullName>3 beta-hydroxysteroid dehydrogenase/Delta 5--&gt;4-isomerase type IV</fullName>
        <shortName>3-beta-HSD IV</shortName>
    </alternativeName>
    <domain>
        <recommendedName>
            <fullName>3-beta-hydroxy-Delta(5)-steroid dehydrogenase</fullName>
            <ecNumber>1.1.1.145</ecNumber>
        </recommendedName>
        <alternativeName>
            <fullName>3-beta-hydroxy-5-ene steroid dehydrogenase</fullName>
        </alternativeName>
        <alternativeName>
            <fullName>Progesterone reductase</fullName>
        </alternativeName>
    </domain>
    <domain>
        <recommendedName>
            <fullName>Steroid Delta-isomerase</fullName>
            <ecNumber>5.3.3.1</ecNumber>
        </recommendedName>
        <alternativeName>
            <fullName>Delta-5-3-ketosteroid isomerase</fullName>
        </alternativeName>
    </domain>
</protein>
<name>3BHS4_RAT</name>
<sequence length="373" mass="41957">MPGWSCLVTGAGGFLGQRIVQLLVQEKDLKEVRVLDKVFRPETREEFFNLGTSIKVTVLEGDILDTQCLRRACQGISVVIHTAALIDVTGVNPRQTILDVNLKGTQNLLEACVQASVPAFIYCSTVDVAGPNSYKKIILNGHEEEHHESTWSNPYPYSKKMAEKAVLAANGSILKNGGTLHTCALRPMYIYGERSPFLSVMILAALKSKGILNVTGKFSIANPVYVGNVAWAHILAARGLRDPKKSQNVQGQFYYISDDTPHQSYDDLNYTLSKEWGLHLDSSWSLPLPLLYWLAFLLEIVSFFLHPVYNYRPSFNRHLVTLSNSKFTFSYKKAQRDLGYKPLVSWEEAKQKTSEWIGTLVEQHRETLDTKSQ</sequence>
<accession>Q62878</accession>
<accession>Q5FVK0</accession>
<dbReference type="EC" id="1.1.1.145"/>
<dbReference type="EC" id="5.3.3.1"/>
<dbReference type="EMBL" id="L17138">
    <property type="protein sequence ID" value="AAA40606.1"/>
    <property type="molecule type" value="mRNA"/>
</dbReference>
<dbReference type="EMBL" id="BC089937">
    <property type="protein sequence ID" value="AAH89937.1"/>
    <property type="molecule type" value="mRNA"/>
</dbReference>
<dbReference type="PIR" id="A48769">
    <property type="entry name" value="A48769"/>
</dbReference>
<dbReference type="RefSeq" id="NP_058961.4">
    <property type="nucleotide sequence ID" value="NM_017265.4"/>
</dbReference>
<dbReference type="RefSeq" id="XP_017446814.1">
    <property type="nucleotide sequence ID" value="XM_017591325.1"/>
</dbReference>
<dbReference type="SMR" id="Q62878"/>
<dbReference type="FunCoup" id="Q62878">
    <property type="interactions" value="9"/>
</dbReference>
<dbReference type="STRING" id="10116.ENSRNOP00000026306"/>
<dbReference type="PhosphoSitePlus" id="Q62878"/>
<dbReference type="PaxDb" id="10116-ENSRNOP00000026306"/>
<dbReference type="Ensembl" id="ENSRNOT00000026306.6">
    <property type="protein sequence ID" value="ENSRNOP00000026306.4"/>
    <property type="gene ID" value="ENSRNOG00000019441.6"/>
</dbReference>
<dbReference type="GeneID" id="29632"/>
<dbReference type="KEGG" id="rno:29632"/>
<dbReference type="UCSC" id="RGD:67377">
    <property type="organism name" value="rat"/>
</dbReference>
<dbReference type="AGR" id="RGD:67377"/>
<dbReference type="CTD" id="3284"/>
<dbReference type="RGD" id="67377">
    <property type="gene designation" value="Hsd3b6"/>
</dbReference>
<dbReference type="eggNOG" id="KOG1430">
    <property type="taxonomic scope" value="Eukaryota"/>
</dbReference>
<dbReference type="GeneTree" id="ENSGT00940000155444"/>
<dbReference type="HOGENOM" id="CLU_007383_6_3_1"/>
<dbReference type="InParanoid" id="Q62878"/>
<dbReference type="OMA" id="DTFYTCA"/>
<dbReference type="OrthoDB" id="74839at9989"/>
<dbReference type="PhylomeDB" id="Q62878"/>
<dbReference type="TreeFam" id="TF343138"/>
<dbReference type="Reactome" id="R-RNO-193048">
    <property type="pathway name" value="Androgen biosynthesis"/>
</dbReference>
<dbReference type="Reactome" id="R-RNO-193993">
    <property type="pathway name" value="Mineralocorticoid biosynthesis"/>
</dbReference>
<dbReference type="Reactome" id="R-RNO-194002">
    <property type="pathway name" value="Glucocorticoid biosynthesis"/>
</dbReference>
<dbReference type="UniPathway" id="UPA00062"/>
<dbReference type="PRO" id="PR:Q62878"/>
<dbReference type="Proteomes" id="UP000002494">
    <property type="component" value="Chromosome 2"/>
</dbReference>
<dbReference type="Bgee" id="ENSRNOG00000019441">
    <property type="expression patterns" value="Expressed in ovary and 1 other cell type or tissue"/>
</dbReference>
<dbReference type="GO" id="GO:0005737">
    <property type="term" value="C:cytoplasm"/>
    <property type="evidence" value="ECO:0000318"/>
    <property type="project" value="GO_Central"/>
</dbReference>
<dbReference type="GO" id="GO:0005783">
    <property type="term" value="C:endoplasmic reticulum"/>
    <property type="evidence" value="ECO:0000266"/>
    <property type="project" value="RGD"/>
</dbReference>
<dbReference type="GO" id="GO:0005789">
    <property type="term" value="C:endoplasmic reticulum membrane"/>
    <property type="evidence" value="ECO:0007669"/>
    <property type="project" value="UniProtKB-SubCell"/>
</dbReference>
<dbReference type="GO" id="GO:0043231">
    <property type="term" value="C:intracellular membrane-bounded organelle"/>
    <property type="evidence" value="ECO:0000318"/>
    <property type="project" value="GO_Central"/>
</dbReference>
<dbReference type="GO" id="GO:0031966">
    <property type="term" value="C:mitochondrial membrane"/>
    <property type="evidence" value="ECO:0007669"/>
    <property type="project" value="UniProtKB-SubCell"/>
</dbReference>
<dbReference type="GO" id="GO:0003854">
    <property type="term" value="F:3-beta-hydroxy-Delta5-steroid dehydrogenase (NAD+) activity"/>
    <property type="evidence" value="ECO:0000314"/>
    <property type="project" value="RGD"/>
</dbReference>
<dbReference type="GO" id="GO:0016853">
    <property type="term" value="F:isomerase activity"/>
    <property type="evidence" value="ECO:0000304"/>
    <property type="project" value="RGD"/>
</dbReference>
<dbReference type="GO" id="GO:0016616">
    <property type="term" value="F:oxidoreductase activity, acting on the CH-OH group of donors, NAD or NADP as acceptor"/>
    <property type="evidence" value="ECO:0000318"/>
    <property type="project" value="GO_Central"/>
</dbReference>
<dbReference type="GO" id="GO:0004769">
    <property type="term" value="F:steroid Delta-isomerase activity"/>
    <property type="evidence" value="ECO:0000314"/>
    <property type="project" value="RGD"/>
</dbReference>
<dbReference type="GO" id="GO:0030283">
    <property type="term" value="F:testosterone dehydrogenase [NAD(P)+] activity"/>
    <property type="evidence" value="ECO:0000304"/>
    <property type="project" value="RGD"/>
</dbReference>
<dbReference type="GO" id="GO:0006702">
    <property type="term" value="P:androgen biosynthetic process"/>
    <property type="evidence" value="ECO:0000314"/>
    <property type="project" value="RGD"/>
</dbReference>
<dbReference type="GO" id="GO:0006700">
    <property type="term" value="P:C21-steroid hormone biosynthetic process"/>
    <property type="evidence" value="ECO:0000314"/>
    <property type="project" value="RGD"/>
</dbReference>
<dbReference type="GO" id="GO:0008207">
    <property type="term" value="P:C21-steroid hormone metabolic process"/>
    <property type="evidence" value="ECO:0000318"/>
    <property type="project" value="GO_Central"/>
</dbReference>
<dbReference type="GO" id="GO:0021766">
    <property type="term" value="P:hippocampus development"/>
    <property type="evidence" value="ECO:0000270"/>
    <property type="project" value="RGD"/>
</dbReference>
<dbReference type="GO" id="GO:0033327">
    <property type="term" value="P:Leydig cell differentiation"/>
    <property type="evidence" value="ECO:0000270"/>
    <property type="project" value="RGD"/>
</dbReference>
<dbReference type="GO" id="GO:0034757">
    <property type="term" value="P:negative regulation of iron ion transport"/>
    <property type="evidence" value="ECO:0000315"/>
    <property type="project" value="RGD"/>
</dbReference>
<dbReference type="GO" id="GO:0046686">
    <property type="term" value="P:response to cadmium ion"/>
    <property type="evidence" value="ECO:0000270"/>
    <property type="project" value="RGD"/>
</dbReference>
<dbReference type="GO" id="GO:0051412">
    <property type="term" value="P:response to corticosterone"/>
    <property type="evidence" value="ECO:0000270"/>
    <property type="project" value="RGD"/>
</dbReference>
<dbReference type="GO" id="GO:0034698">
    <property type="term" value="P:response to gonadotropin"/>
    <property type="evidence" value="ECO:0000270"/>
    <property type="project" value="RGD"/>
</dbReference>
<dbReference type="GO" id="GO:0010288">
    <property type="term" value="P:response to lead ion"/>
    <property type="evidence" value="ECO:0000270"/>
    <property type="project" value="RGD"/>
</dbReference>
<dbReference type="GO" id="GO:0006694">
    <property type="term" value="P:steroid biosynthetic process"/>
    <property type="evidence" value="ECO:0000266"/>
    <property type="project" value="RGD"/>
</dbReference>
<dbReference type="FunFam" id="3.40.50.720:FF:000220">
    <property type="entry name" value="3 beta-hydroxysteroid dehydrogenase/Delta 5--&gt;4-isomerase type 1"/>
    <property type="match status" value="1"/>
</dbReference>
<dbReference type="Gene3D" id="3.40.50.720">
    <property type="entry name" value="NAD(P)-binding Rossmann-like Domain"/>
    <property type="match status" value="1"/>
</dbReference>
<dbReference type="InterPro" id="IPR002225">
    <property type="entry name" value="3Beta_OHSteriod_DH/Estase"/>
</dbReference>
<dbReference type="InterPro" id="IPR050177">
    <property type="entry name" value="Lipid_A_modif_metabolic_enz"/>
</dbReference>
<dbReference type="InterPro" id="IPR036291">
    <property type="entry name" value="NAD(P)-bd_dom_sf"/>
</dbReference>
<dbReference type="PANTHER" id="PTHR43245">
    <property type="entry name" value="BIFUNCTIONAL POLYMYXIN RESISTANCE PROTEIN ARNA"/>
    <property type="match status" value="1"/>
</dbReference>
<dbReference type="PANTHER" id="PTHR43245:SF51">
    <property type="entry name" value="SHORT CHAIN DEHYDROGENASE_REDUCTASE FAMILY 42E, MEMBER 2"/>
    <property type="match status" value="1"/>
</dbReference>
<dbReference type="Pfam" id="PF01073">
    <property type="entry name" value="3Beta_HSD"/>
    <property type="match status" value="1"/>
</dbReference>
<dbReference type="SUPFAM" id="SSF51735">
    <property type="entry name" value="NAD(P)-binding Rossmann-fold domains"/>
    <property type="match status" value="1"/>
</dbReference>